<feature type="chain" id="PRO_0000175789" description="Probable transcriptional regulatory protein ORF2U">
    <location>
        <begin position="1"/>
        <end position="246"/>
    </location>
</feature>
<organism>
    <name type="scientific">Hathewaya histolytica</name>
    <name type="common">Clostridium histolyticum</name>
    <dbReference type="NCBI Taxonomy" id="1498"/>
    <lineage>
        <taxon>Bacteria</taxon>
        <taxon>Bacillati</taxon>
        <taxon>Bacillota</taxon>
        <taxon>Clostridia</taxon>
        <taxon>Eubacteriales</taxon>
        <taxon>Clostridiaceae</taxon>
        <taxon>Hathewaya</taxon>
    </lineage>
</organism>
<name>YU82_HATHI</name>
<protein>
    <recommendedName>
        <fullName evidence="1">Probable transcriptional regulatory protein ORF2U</fullName>
    </recommendedName>
</protein>
<proteinExistence type="inferred from homology"/>
<sequence length="246" mass="27176">MSGHSKWHNIQAKKSKVDAKRGKIFTKIGKEIAIAAKNGGPNPDANPKLRDVIAKAKANNMPKDSIERAIKKAAGELAGVNYEEILYEGYGPDGIAVLVQALTDNKNRSAGNVRHAFSKHGGNLGSTGCVSFMFQTKGQIVIEKNDELDEEELMMMALECGAEDFQSEDEVYIITTSPEDFGSVRETLEEKGLEFLEAEVKSIPDTYTVIDENTAGKFQKMLDVLEDDEDVQDVYHNAEFPEGWEE</sequence>
<reference key="1">
    <citation type="journal article" date="1999" name="J. Bacteriol.">
        <title>Gene duplication and multiplicity of collagenases in Clostridium histolyticum.</title>
        <authorList>
            <person name="Matsushita O."/>
            <person name="Jung C.-M."/>
            <person name="Katayama S."/>
            <person name="Minami J."/>
            <person name="Takahashi Y."/>
            <person name="Okabe A."/>
        </authorList>
    </citation>
    <scope>NUCLEOTIDE SEQUENCE [GENOMIC DNA]</scope>
    <source>
        <strain>ATCC 19401 / DSM 2158 / JCM 1403 / NCIMB 503 / NCTC 503</strain>
    </source>
</reference>
<comment type="subcellular location">
    <subcellularLocation>
        <location evidence="1">Cytoplasm</location>
    </subcellularLocation>
</comment>
<comment type="similarity">
    <text evidence="1">Belongs to the TACO1 family.</text>
</comment>
<evidence type="ECO:0000255" key="1">
    <source>
        <dbReference type="HAMAP-Rule" id="MF_00693"/>
    </source>
</evidence>
<keyword id="KW-0963">Cytoplasm</keyword>
<keyword id="KW-0238">DNA-binding</keyword>
<keyword id="KW-0804">Transcription</keyword>
<keyword id="KW-0805">Transcription regulation</keyword>
<dbReference type="EMBL" id="AB014075">
    <property type="protein sequence ID" value="BAA34259.1"/>
    <property type="molecule type" value="Genomic_DNA"/>
</dbReference>
<dbReference type="PIR" id="T44353">
    <property type="entry name" value="T44353"/>
</dbReference>
<dbReference type="RefSeq" id="WP_138210554.1">
    <property type="nucleotide sequence ID" value="NZ_CBCRUQ010000003.1"/>
</dbReference>
<dbReference type="SMR" id="Q9ZNK0"/>
<dbReference type="OrthoDB" id="9781053at2"/>
<dbReference type="GO" id="GO:0005829">
    <property type="term" value="C:cytosol"/>
    <property type="evidence" value="ECO:0007669"/>
    <property type="project" value="TreeGrafter"/>
</dbReference>
<dbReference type="GO" id="GO:0003677">
    <property type="term" value="F:DNA binding"/>
    <property type="evidence" value="ECO:0007669"/>
    <property type="project" value="UniProtKB-UniRule"/>
</dbReference>
<dbReference type="GO" id="GO:0006355">
    <property type="term" value="P:regulation of DNA-templated transcription"/>
    <property type="evidence" value="ECO:0007669"/>
    <property type="project" value="UniProtKB-UniRule"/>
</dbReference>
<dbReference type="FunFam" id="1.10.10.200:FF:000002">
    <property type="entry name" value="Probable transcriptional regulatory protein CLM62_37755"/>
    <property type="match status" value="1"/>
</dbReference>
<dbReference type="FunFam" id="3.30.70.980:FF:000002">
    <property type="entry name" value="Probable transcriptional regulatory protein YebC"/>
    <property type="match status" value="1"/>
</dbReference>
<dbReference type="Gene3D" id="1.10.10.200">
    <property type="match status" value="1"/>
</dbReference>
<dbReference type="Gene3D" id="3.30.70.980">
    <property type="match status" value="2"/>
</dbReference>
<dbReference type="HAMAP" id="MF_00693">
    <property type="entry name" value="Transcrip_reg_TACO1"/>
    <property type="match status" value="1"/>
</dbReference>
<dbReference type="InterPro" id="IPR017856">
    <property type="entry name" value="Integrase-like_N"/>
</dbReference>
<dbReference type="InterPro" id="IPR048300">
    <property type="entry name" value="TACO1_YebC-like_2nd/3rd_dom"/>
</dbReference>
<dbReference type="InterPro" id="IPR049083">
    <property type="entry name" value="TACO1_YebC_N"/>
</dbReference>
<dbReference type="InterPro" id="IPR002876">
    <property type="entry name" value="Transcrip_reg_TACO1-like"/>
</dbReference>
<dbReference type="InterPro" id="IPR026564">
    <property type="entry name" value="Transcrip_reg_TACO1-like_dom3"/>
</dbReference>
<dbReference type="InterPro" id="IPR029072">
    <property type="entry name" value="YebC-like"/>
</dbReference>
<dbReference type="NCBIfam" id="NF001030">
    <property type="entry name" value="PRK00110.1"/>
    <property type="match status" value="1"/>
</dbReference>
<dbReference type="NCBIfam" id="NF009044">
    <property type="entry name" value="PRK12378.1"/>
    <property type="match status" value="1"/>
</dbReference>
<dbReference type="NCBIfam" id="TIGR01033">
    <property type="entry name" value="YebC/PmpR family DNA-binding transcriptional regulator"/>
    <property type="match status" value="1"/>
</dbReference>
<dbReference type="PANTHER" id="PTHR12532:SF6">
    <property type="entry name" value="TRANSCRIPTIONAL REGULATORY PROTEIN YEBC-RELATED"/>
    <property type="match status" value="1"/>
</dbReference>
<dbReference type="PANTHER" id="PTHR12532">
    <property type="entry name" value="TRANSLATIONAL ACTIVATOR OF CYTOCHROME C OXIDASE 1"/>
    <property type="match status" value="1"/>
</dbReference>
<dbReference type="Pfam" id="PF20772">
    <property type="entry name" value="TACO1_YebC_N"/>
    <property type="match status" value="1"/>
</dbReference>
<dbReference type="Pfam" id="PF01709">
    <property type="entry name" value="Transcrip_reg"/>
    <property type="match status" value="1"/>
</dbReference>
<dbReference type="SUPFAM" id="SSF75625">
    <property type="entry name" value="YebC-like"/>
    <property type="match status" value="1"/>
</dbReference>
<accession>Q9ZNK0</accession>